<protein>
    <recommendedName>
        <fullName evidence="1">Gamma-glutamyl phosphate reductase</fullName>
        <shortName evidence="1">GPR</shortName>
        <ecNumber evidence="1">1.2.1.41</ecNumber>
    </recommendedName>
    <alternativeName>
        <fullName evidence="1">Glutamate-5-semialdehyde dehydrogenase</fullName>
    </alternativeName>
    <alternativeName>
        <fullName evidence="1">Glutamyl-gamma-semialdehyde dehydrogenase</fullName>
        <shortName evidence="1">GSA dehydrogenase</shortName>
    </alternativeName>
</protein>
<proteinExistence type="inferred from homology"/>
<name>PROA_HALOH</name>
<gene>
    <name evidence="1" type="primary">proA</name>
    <name type="ordered locus">Hore_01930</name>
</gene>
<comment type="function">
    <text evidence="1">Catalyzes the NADPH-dependent reduction of L-glutamate 5-phosphate into L-glutamate 5-semialdehyde and phosphate. The product spontaneously undergoes cyclization to form 1-pyrroline-5-carboxylate.</text>
</comment>
<comment type="catalytic activity">
    <reaction evidence="1">
        <text>L-glutamate 5-semialdehyde + phosphate + NADP(+) = L-glutamyl 5-phosphate + NADPH + H(+)</text>
        <dbReference type="Rhea" id="RHEA:19541"/>
        <dbReference type="ChEBI" id="CHEBI:15378"/>
        <dbReference type="ChEBI" id="CHEBI:43474"/>
        <dbReference type="ChEBI" id="CHEBI:57783"/>
        <dbReference type="ChEBI" id="CHEBI:58066"/>
        <dbReference type="ChEBI" id="CHEBI:58274"/>
        <dbReference type="ChEBI" id="CHEBI:58349"/>
        <dbReference type="EC" id="1.2.1.41"/>
    </reaction>
</comment>
<comment type="pathway">
    <text evidence="1">Amino-acid biosynthesis; L-proline biosynthesis; L-glutamate 5-semialdehyde from L-glutamate: step 2/2.</text>
</comment>
<comment type="subcellular location">
    <subcellularLocation>
        <location evidence="1">Cytoplasm</location>
    </subcellularLocation>
</comment>
<comment type="similarity">
    <text evidence="1">Belongs to the gamma-glutamyl phosphate reductase family.</text>
</comment>
<organism>
    <name type="scientific">Halothermothrix orenii (strain H 168 / OCM 544 / DSM 9562)</name>
    <dbReference type="NCBI Taxonomy" id="373903"/>
    <lineage>
        <taxon>Bacteria</taxon>
        <taxon>Bacillati</taxon>
        <taxon>Bacillota</taxon>
        <taxon>Clostridia</taxon>
        <taxon>Halanaerobiales</taxon>
        <taxon>Halothermotrichaceae</taxon>
        <taxon>Halothermothrix</taxon>
    </lineage>
</organism>
<accession>B8D0Y6</accession>
<evidence type="ECO:0000255" key="1">
    <source>
        <dbReference type="HAMAP-Rule" id="MF_00412"/>
    </source>
</evidence>
<sequence length="418" mass="45982">MEIKEQVVFQARKASKASRKLSGIATDVKNKALAAIAEKLVQAKDEIIRANNIDMERGREKGLSKALLDRLELNEKRIEGMAEGLKELVKLEDPVGEVIKMWKRPNGLQIGQMRVPLGVIGMIYEARPNVTVDAAGLCLKTGNAVILRGGSEAINSNKILARIIEDTAVAAGLPEGCVQLIQTTDRKAVKVLFNLTEYLDVLIPRGGAGLINRVIAEAKVPVIQTGVGNCHVYVDSEADLDMALDIVFNAKTSRPAVCNAAESLLVHRQVADEFLPELYKLFRENNVELRGCENTRAILPGIKKAVDDDWSREYLDYIMAVKIVDSFDKAVEHINTYGTKHSEAIITENYTRAHRFLQEIDAAAVYVNASTRFTDGGQFGLGAEIGISTQKLHARGPMGLEELTTTKYIIFGQGQIRE</sequence>
<dbReference type="EC" id="1.2.1.41" evidence="1"/>
<dbReference type="EMBL" id="CP001098">
    <property type="protein sequence ID" value="ACL68955.1"/>
    <property type="molecule type" value="Genomic_DNA"/>
</dbReference>
<dbReference type="RefSeq" id="WP_012635153.1">
    <property type="nucleotide sequence ID" value="NC_011899.1"/>
</dbReference>
<dbReference type="SMR" id="B8D0Y6"/>
<dbReference type="STRING" id="373903.Hore_01930"/>
<dbReference type="KEGG" id="hor:Hore_01930"/>
<dbReference type="eggNOG" id="COG0014">
    <property type="taxonomic scope" value="Bacteria"/>
</dbReference>
<dbReference type="HOGENOM" id="CLU_030231_0_0_9"/>
<dbReference type="OrthoDB" id="9809970at2"/>
<dbReference type="UniPathway" id="UPA00098">
    <property type="reaction ID" value="UER00360"/>
</dbReference>
<dbReference type="Proteomes" id="UP000000719">
    <property type="component" value="Chromosome"/>
</dbReference>
<dbReference type="GO" id="GO:0005737">
    <property type="term" value="C:cytoplasm"/>
    <property type="evidence" value="ECO:0007669"/>
    <property type="project" value="UniProtKB-SubCell"/>
</dbReference>
<dbReference type="GO" id="GO:0004350">
    <property type="term" value="F:glutamate-5-semialdehyde dehydrogenase activity"/>
    <property type="evidence" value="ECO:0007669"/>
    <property type="project" value="UniProtKB-UniRule"/>
</dbReference>
<dbReference type="GO" id="GO:0050661">
    <property type="term" value="F:NADP binding"/>
    <property type="evidence" value="ECO:0007669"/>
    <property type="project" value="InterPro"/>
</dbReference>
<dbReference type="GO" id="GO:0055129">
    <property type="term" value="P:L-proline biosynthetic process"/>
    <property type="evidence" value="ECO:0007669"/>
    <property type="project" value="UniProtKB-UniRule"/>
</dbReference>
<dbReference type="CDD" id="cd07079">
    <property type="entry name" value="ALDH_F18-19_ProA-GPR"/>
    <property type="match status" value="1"/>
</dbReference>
<dbReference type="FunFam" id="3.40.309.10:FF:000006">
    <property type="entry name" value="Gamma-glutamyl phosphate reductase"/>
    <property type="match status" value="1"/>
</dbReference>
<dbReference type="Gene3D" id="3.40.605.10">
    <property type="entry name" value="Aldehyde Dehydrogenase, Chain A, domain 1"/>
    <property type="match status" value="1"/>
</dbReference>
<dbReference type="Gene3D" id="3.40.309.10">
    <property type="entry name" value="Aldehyde Dehydrogenase, Chain A, domain 2"/>
    <property type="match status" value="1"/>
</dbReference>
<dbReference type="HAMAP" id="MF_00412">
    <property type="entry name" value="ProA"/>
    <property type="match status" value="1"/>
</dbReference>
<dbReference type="InterPro" id="IPR016161">
    <property type="entry name" value="Ald_DH/histidinol_DH"/>
</dbReference>
<dbReference type="InterPro" id="IPR016163">
    <property type="entry name" value="Ald_DH_C"/>
</dbReference>
<dbReference type="InterPro" id="IPR016162">
    <property type="entry name" value="Ald_DH_N"/>
</dbReference>
<dbReference type="InterPro" id="IPR015590">
    <property type="entry name" value="Aldehyde_DH_dom"/>
</dbReference>
<dbReference type="InterPro" id="IPR020593">
    <property type="entry name" value="G-glutamylP_reductase_CS"/>
</dbReference>
<dbReference type="InterPro" id="IPR012134">
    <property type="entry name" value="Glu-5-SA_DH"/>
</dbReference>
<dbReference type="InterPro" id="IPR000965">
    <property type="entry name" value="GPR_dom"/>
</dbReference>
<dbReference type="NCBIfam" id="NF001221">
    <property type="entry name" value="PRK00197.1"/>
    <property type="match status" value="1"/>
</dbReference>
<dbReference type="NCBIfam" id="TIGR00407">
    <property type="entry name" value="proA"/>
    <property type="match status" value="1"/>
</dbReference>
<dbReference type="PANTHER" id="PTHR11063:SF8">
    <property type="entry name" value="DELTA-1-PYRROLINE-5-CARBOXYLATE SYNTHASE"/>
    <property type="match status" value="1"/>
</dbReference>
<dbReference type="PANTHER" id="PTHR11063">
    <property type="entry name" value="GLUTAMATE SEMIALDEHYDE DEHYDROGENASE"/>
    <property type="match status" value="1"/>
</dbReference>
<dbReference type="Pfam" id="PF00171">
    <property type="entry name" value="Aldedh"/>
    <property type="match status" value="2"/>
</dbReference>
<dbReference type="PIRSF" id="PIRSF000151">
    <property type="entry name" value="GPR"/>
    <property type="match status" value="1"/>
</dbReference>
<dbReference type="SUPFAM" id="SSF53720">
    <property type="entry name" value="ALDH-like"/>
    <property type="match status" value="1"/>
</dbReference>
<dbReference type="PROSITE" id="PS01223">
    <property type="entry name" value="PROA"/>
    <property type="match status" value="1"/>
</dbReference>
<reference key="1">
    <citation type="journal article" date="2009" name="PLoS ONE">
        <title>Genome analysis of the anaerobic thermohalophilic bacterium Halothermothrix orenii.</title>
        <authorList>
            <person name="Mavromatis K."/>
            <person name="Ivanova N."/>
            <person name="Anderson I."/>
            <person name="Lykidis A."/>
            <person name="Hooper S.D."/>
            <person name="Sun H."/>
            <person name="Kunin V."/>
            <person name="Lapidus A."/>
            <person name="Hugenholtz P."/>
            <person name="Patel B."/>
            <person name="Kyrpides N.C."/>
        </authorList>
    </citation>
    <scope>NUCLEOTIDE SEQUENCE [LARGE SCALE GENOMIC DNA]</scope>
    <source>
        <strain>H 168 / OCM 544 / DSM 9562</strain>
    </source>
</reference>
<keyword id="KW-0028">Amino-acid biosynthesis</keyword>
<keyword id="KW-0963">Cytoplasm</keyword>
<keyword id="KW-0521">NADP</keyword>
<keyword id="KW-0560">Oxidoreductase</keyword>
<keyword id="KW-0641">Proline biosynthesis</keyword>
<keyword id="KW-1185">Reference proteome</keyword>
<feature type="chain" id="PRO_1000193615" description="Gamma-glutamyl phosphate reductase">
    <location>
        <begin position="1"/>
        <end position="418"/>
    </location>
</feature>